<dbReference type="EC" id="1.3.3.3" evidence="1"/>
<dbReference type="EMBL" id="AM286415">
    <property type="protein sequence ID" value="CAL11261.1"/>
    <property type="molecule type" value="Genomic_DNA"/>
</dbReference>
<dbReference type="RefSeq" id="WP_005172302.1">
    <property type="nucleotide sequence ID" value="NC_008800.1"/>
</dbReference>
<dbReference type="RefSeq" id="YP_001005494.1">
    <property type="nucleotide sequence ID" value="NC_008800.1"/>
</dbReference>
<dbReference type="SMR" id="A1JL37"/>
<dbReference type="KEGG" id="yen:YE1168"/>
<dbReference type="PATRIC" id="fig|393305.7.peg.1273"/>
<dbReference type="eggNOG" id="COG0408">
    <property type="taxonomic scope" value="Bacteria"/>
</dbReference>
<dbReference type="HOGENOM" id="CLU_026169_0_1_6"/>
<dbReference type="OrthoDB" id="9777553at2"/>
<dbReference type="UniPathway" id="UPA00251">
    <property type="reaction ID" value="UER00322"/>
</dbReference>
<dbReference type="Proteomes" id="UP000000642">
    <property type="component" value="Chromosome"/>
</dbReference>
<dbReference type="GO" id="GO:0005737">
    <property type="term" value="C:cytoplasm"/>
    <property type="evidence" value="ECO:0007669"/>
    <property type="project" value="UniProtKB-SubCell"/>
</dbReference>
<dbReference type="GO" id="GO:0004109">
    <property type="term" value="F:coproporphyrinogen oxidase activity"/>
    <property type="evidence" value="ECO:0007669"/>
    <property type="project" value="UniProtKB-UniRule"/>
</dbReference>
<dbReference type="GO" id="GO:0046872">
    <property type="term" value="F:metal ion binding"/>
    <property type="evidence" value="ECO:0007669"/>
    <property type="project" value="UniProtKB-KW"/>
</dbReference>
<dbReference type="GO" id="GO:0042803">
    <property type="term" value="F:protein homodimerization activity"/>
    <property type="evidence" value="ECO:0000250"/>
    <property type="project" value="UniProtKB"/>
</dbReference>
<dbReference type="GO" id="GO:0006782">
    <property type="term" value="P:protoporphyrinogen IX biosynthetic process"/>
    <property type="evidence" value="ECO:0007669"/>
    <property type="project" value="UniProtKB-UniRule"/>
</dbReference>
<dbReference type="FunFam" id="3.40.1500.10:FF:000001">
    <property type="entry name" value="Oxygen-dependent coproporphyrinogen-III oxidase"/>
    <property type="match status" value="1"/>
</dbReference>
<dbReference type="Gene3D" id="3.40.1500.10">
    <property type="entry name" value="Coproporphyrinogen III oxidase, aerobic"/>
    <property type="match status" value="1"/>
</dbReference>
<dbReference type="HAMAP" id="MF_00333">
    <property type="entry name" value="Coprogen_oxidas"/>
    <property type="match status" value="1"/>
</dbReference>
<dbReference type="InterPro" id="IPR001260">
    <property type="entry name" value="Coprogen_oxidase_aer"/>
</dbReference>
<dbReference type="InterPro" id="IPR036406">
    <property type="entry name" value="Coprogen_oxidase_aer_sf"/>
</dbReference>
<dbReference type="InterPro" id="IPR018375">
    <property type="entry name" value="Coprogen_oxidase_CS"/>
</dbReference>
<dbReference type="NCBIfam" id="NF003727">
    <property type="entry name" value="PRK05330.1"/>
    <property type="match status" value="1"/>
</dbReference>
<dbReference type="PANTHER" id="PTHR10755">
    <property type="entry name" value="COPROPORPHYRINOGEN III OXIDASE, MITOCHONDRIAL"/>
    <property type="match status" value="1"/>
</dbReference>
<dbReference type="PANTHER" id="PTHR10755:SF0">
    <property type="entry name" value="OXYGEN-DEPENDENT COPROPORPHYRINOGEN-III OXIDASE, MITOCHONDRIAL"/>
    <property type="match status" value="1"/>
</dbReference>
<dbReference type="Pfam" id="PF01218">
    <property type="entry name" value="Coprogen_oxidas"/>
    <property type="match status" value="1"/>
</dbReference>
<dbReference type="PIRSF" id="PIRSF000166">
    <property type="entry name" value="Coproporphyri_ox"/>
    <property type="match status" value="1"/>
</dbReference>
<dbReference type="PRINTS" id="PR00073">
    <property type="entry name" value="COPRGNOXDASE"/>
</dbReference>
<dbReference type="SUPFAM" id="SSF102886">
    <property type="entry name" value="Coproporphyrinogen III oxidase"/>
    <property type="match status" value="1"/>
</dbReference>
<dbReference type="PROSITE" id="PS01021">
    <property type="entry name" value="COPROGEN_OXIDASE"/>
    <property type="match status" value="1"/>
</dbReference>
<comment type="function">
    <text evidence="1">Involved in the heme biosynthesis. Catalyzes the aerobic oxidative decarboxylation of propionate groups of rings A and B of coproporphyrinogen-III to yield the vinyl groups in protoporphyrinogen-IX.</text>
</comment>
<comment type="catalytic activity">
    <reaction evidence="1">
        <text>coproporphyrinogen III + O2 + 2 H(+) = protoporphyrinogen IX + 2 CO2 + 2 H2O</text>
        <dbReference type="Rhea" id="RHEA:18257"/>
        <dbReference type="ChEBI" id="CHEBI:15377"/>
        <dbReference type="ChEBI" id="CHEBI:15378"/>
        <dbReference type="ChEBI" id="CHEBI:15379"/>
        <dbReference type="ChEBI" id="CHEBI:16526"/>
        <dbReference type="ChEBI" id="CHEBI:57307"/>
        <dbReference type="ChEBI" id="CHEBI:57309"/>
        <dbReference type="EC" id="1.3.3.3"/>
    </reaction>
</comment>
<comment type="cofactor">
    <cofactor evidence="1">
        <name>a divalent metal cation</name>
        <dbReference type="ChEBI" id="CHEBI:60240"/>
    </cofactor>
</comment>
<comment type="pathway">
    <text evidence="1">Porphyrin-containing compound metabolism; protoporphyrin-IX biosynthesis; protoporphyrinogen-IX from coproporphyrinogen-III (O2 route): step 1/1.</text>
</comment>
<comment type="subunit">
    <text evidence="1">Homodimer.</text>
</comment>
<comment type="subcellular location">
    <subcellularLocation>
        <location evidence="1">Cytoplasm</location>
    </subcellularLocation>
</comment>
<comment type="similarity">
    <text evidence="1">Belongs to the aerobic coproporphyrinogen-III oxidase family.</text>
</comment>
<organism>
    <name type="scientific">Yersinia enterocolitica serotype O:8 / biotype 1B (strain NCTC 13174 / 8081)</name>
    <dbReference type="NCBI Taxonomy" id="393305"/>
    <lineage>
        <taxon>Bacteria</taxon>
        <taxon>Pseudomonadati</taxon>
        <taxon>Pseudomonadota</taxon>
        <taxon>Gammaproteobacteria</taxon>
        <taxon>Enterobacterales</taxon>
        <taxon>Yersiniaceae</taxon>
        <taxon>Yersinia</taxon>
    </lineage>
</organism>
<keyword id="KW-0963">Cytoplasm</keyword>
<keyword id="KW-0350">Heme biosynthesis</keyword>
<keyword id="KW-0479">Metal-binding</keyword>
<keyword id="KW-0560">Oxidoreductase</keyword>
<keyword id="KW-0627">Porphyrin biosynthesis</keyword>
<sequence>MNLPNIDQIKTYLLDLQDKICAALAQADGSAKFTEENWVREEGGGGRSRVMVKGAVFEQAGVNFSHVSGAALPASATAHRPELAGRSFQALGVSLVIHPNSPYLPTSHANVRFFIAEKPDEDPVWWFGGGFDLTPFYGFEEDAIHWHQTAYNLCQPFGEQLYSRYKKWCDDYFYIKHRNEARGIGGLFFDDLNSPDFDTCFNFTQAVGDGFLDAYMPIVARRKALCWGEREREFQLYRRGRYVEFNLVWDRGTLFGLQTGGRTESILMSMPPLVRWEYNYQPAADSAEVALYRDFLPVKDWLAAGEHH</sequence>
<reference key="1">
    <citation type="journal article" date="2006" name="PLoS Genet.">
        <title>The complete genome sequence and comparative genome analysis of the high pathogenicity Yersinia enterocolitica strain 8081.</title>
        <authorList>
            <person name="Thomson N.R."/>
            <person name="Howard S."/>
            <person name="Wren B.W."/>
            <person name="Holden M.T.G."/>
            <person name="Crossman L."/>
            <person name="Challis G.L."/>
            <person name="Churcher C."/>
            <person name="Mungall K."/>
            <person name="Brooks K."/>
            <person name="Chillingworth T."/>
            <person name="Feltwell T."/>
            <person name="Abdellah Z."/>
            <person name="Hauser H."/>
            <person name="Jagels K."/>
            <person name="Maddison M."/>
            <person name="Moule S."/>
            <person name="Sanders M."/>
            <person name="Whitehead S."/>
            <person name="Quail M.A."/>
            <person name="Dougan G."/>
            <person name="Parkhill J."/>
            <person name="Prentice M.B."/>
        </authorList>
    </citation>
    <scope>NUCLEOTIDE SEQUENCE [LARGE SCALE GENOMIC DNA]</scope>
    <source>
        <strain>NCTC 13174 / 8081</strain>
    </source>
</reference>
<name>HEM6_YERE8</name>
<feature type="chain" id="PRO_1000019516" description="Oxygen-dependent coproporphyrinogen-III oxidase">
    <location>
        <begin position="1"/>
        <end position="308"/>
    </location>
</feature>
<feature type="region of interest" description="Important for dimerization" evidence="1">
    <location>
        <begin position="242"/>
        <end position="277"/>
    </location>
</feature>
<feature type="active site" description="Proton donor" evidence="1">
    <location>
        <position position="108"/>
    </location>
</feature>
<feature type="binding site" evidence="1">
    <location>
        <position position="94"/>
    </location>
    <ligand>
        <name>substrate</name>
    </ligand>
</feature>
<feature type="binding site" evidence="1">
    <location>
        <position position="98"/>
    </location>
    <ligand>
        <name>a divalent metal cation</name>
        <dbReference type="ChEBI" id="CHEBI:60240"/>
    </ligand>
</feature>
<feature type="binding site" evidence="1">
    <location>
        <position position="108"/>
    </location>
    <ligand>
        <name>a divalent metal cation</name>
        <dbReference type="ChEBI" id="CHEBI:60240"/>
    </ligand>
</feature>
<feature type="binding site" evidence="1">
    <location>
        <begin position="110"/>
        <end position="112"/>
    </location>
    <ligand>
        <name>substrate</name>
    </ligand>
</feature>
<feature type="binding site" evidence="1">
    <location>
        <position position="147"/>
    </location>
    <ligand>
        <name>a divalent metal cation</name>
        <dbReference type="ChEBI" id="CHEBI:60240"/>
    </ligand>
</feature>
<feature type="binding site" evidence="1">
    <location>
        <position position="177"/>
    </location>
    <ligand>
        <name>a divalent metal cation</name>
        <dbReference type="ChEBI" id="CHEBI:60240"/>
    </ligand>
</feature>
<feature type="binding site" evidence="1">
    <location>
        <begin position="260"/>
        <end position="262"/>
    </location>
    <ligand>
        <name>substrate</name>
    </ligand>
</feature>
<feature type="site" description="Important for dimerization" evidence="1">
    <location>
        <position position="177"/>
    </location>
</feature>
<accession>A1JL37</accession>
<proteinExistence type="inferred from homology"/>
<protein>
    <recommendedName>
        <fullName evidence="1">Oxygen-dependent coproporphyrinogen-III oxidase</fullName>
        <shortName evidence="1">CPO</shortName>
        <shortName evidence="1">Coprogen oxidase</shortName>
        <shortName evidence="1">Coproporphyrinogenase</shortName>
        <ecNumber evidence="1">1.3.3.3</ecNumber>
    </recommendedName>
</protein>
<evidence type="ECO:0000255" key="1">
    <source>
        <dbReference type="HAMAP-Rule" id="MF_00333"/>
    </source>
</evidence>
<gene>
    <name evidence="1" type="primary">hemF</name>
    <name type="ordered locus">YE1168</name>
</gene>